<organism>
    <name type="scientific">Shewanella frigidimarina (strain NCIMB 400)</name>
    <dbReference type="NCBI Taxonomy" id="318167"/>
    <lineage>
        <taxon>Bacteria</taxon>
        <taxon>Pseudomonadati</taxon>
        <taxon>Pseudomonadota</taxon>
        <taxon>Gammaproteobacteria</taxon>
        <taxon>Alteromonadales</taxon>
        <taxon>Shewanellaceae</taxon>
        <taxon>Shewanella</taxon>
    </lineage>
</organism>
<gene>
    <name evidence="1" type="primary">astE</name>
    <name type="ordered locus">Sfri_1934</name>
</gene>
<name>ASTE_SHEFN</name>
<evidence type="ECO:0000255" key="1">
    <source>
        <dbReference type="HAMAP-Rule" id="MF_00767"/>
    </source>
</evidence>
<proteinExistence type="inferred from homology"/>
<feature type="chain" id="PRO_0000262081" description="Succinylglutamate desuccinylase">
    <location>
        <begin position="1"/>
        <end position="342"/>
    </location>
</feature>
<feature type="active site" evidence="1">
    <location>
        <position position="222"/>
    </location>
</feature>
<feature type="binding site" evidence="1">
    <location>
        <position position="62"/>
    </location>
    <ligand>
        <name>Zn(2+)</name>
        <dbReference type="ChEBI" id="CHEBI:29105"/>
    </ligand>
</feature>
<feature type="binding site" evidence="1">
    <location>
        <position position="65"/>
    </location>
    <ligand>
        <name>Zn(2+)</name>
        <dbReference type="ChEBI" id="CHEBI:29105"/>
    </ligand>
</feature>
<feature type="binding site" evidence="1">
    <location>
        <position position="158"/>
    </location>
    <ligand>
        <name>Zn(2+)</name>
        <dbReference type="ChEBI" id="CHEBI:29105"/>
    </ligand>
</feature>
<accession>Q082N5</accession>
<keyword id="KW-0056">Arginine metabolism</keyword>
<keyword id="KW-0378">Hydrolase</keyword>
<keyword id="KW-0479">Metal-binding</keyword>
<keyword id="KW-1185">Reference proteome</keyword>
<keyword id="KW-0862">Zinc</keyword>
<comment type="function">
    <text evidence="1">Transforms N(2)-succinylglutamate into succinate and glutamate.</text>
</comment>
<comment type="catalytic activity">
    <reaction evidence="1">
        <text>N-succinyl-L-glutamate + H2O = L-glutamate + succinate</text>
        <dbReference type="Rhea" id="RHEA:15169"/>
        <dbReference type="ChEBI" id="CHEBI:15377"/>
        <dbReference type="ChEBI" id="CHEBI:29985"/>
        <dbReference type="ChEBI" id="CHEBI:30031"/>
        <dbReference type="ChEBI" id="CHEBI:58763"/>
        <dbReference type="EC" id="3.5.1.96"/>
    </reaction>
</comment>
<comment type="cofactor">
    <cofactor evidence="1">
        <name>Zn(2+)</name>
        <dbReference type="ChEBI" id="CHEBI:29105"/>
    </cofactor>
    <text evidence="1">Binds 1 zinc ion per subunit.</text>
</comment>
<comment type="pathway">
    <text evidence="1">Amino-acid degradation; L-arginine degradation via AST pathway; L-glutamate and succinate from L-arginine: step 5/5.</text>
</comment>
<comment type="similarity">
    <text evidence="1">Belongs to the AspA/AstE family. Succinylglutamate desuccinylase subfamily.</text>
</comment>
<protein>
    <recommendedName>
        <fullName evidence="1">Succinylglutamate desuccinylase</fullName>
        <ecNumber evidence="1">3.5.1.96</ecNumber>
    </recommendedName>
</protein>
<reference key="1">
    <citation type="submission" date="2006-08" db="EMBL/GenBank/DDBJ databases">
        <title>Complete sequence of Shewanella frigidimarina NCIMB 400.</title>
        <authorList>
            <consortium name="US DOE Joint Genome Institute"/>
            <person name="Copeland A."/>
            <person name="Lucas S."/>
            <person name="Lapidus A."/>
            <person name="Barry K."/>
            <person name="Detter J.C."/>
            <person name="Glavina del Rio T."/>
            <person name="Hammon N."/>
            <person name="Israni S."/>
            <person name="Dalin E."/>
            <person name="Tice H."/>
            <person name="Pitluck S."/>
            <person name="Fredrickson J.K."/>
            <person name="Kolker E."/>
            <person name="McCuel L.A."/>
            <person name="DiChristina T."/>
            <person name="Nealson K.H."/>
            <person name="Newman D."/>
            <person name="Tiedje J.M."/>
            <person name="Zhou J."/>
            <person name="Romine M.F."/>
            <person name="Culley D.E."/>
            <person name="Serres M."/>
            <person name="Chertkov O."/>
            <person name="Brettin T."/>
            <person name="Bruce D."/>
            <person name="Han C."/>
            <person name="Tapia R."/>
            <person name="Gilna P."/>
            <person name="Schmutz J."/>
            <person name="Larimer F."/>
            <person name="Land M."/>
            <person name="Hauser L."/>
            <person name="Kyrpides N."/>
            <person name="Mikhailova N."/>
            <person name="Richardson P."/>
        </authorList>
    </citation>
    <scope>NUCLEOTIDE SEQUENCE [LARGE SCALE GENOMIC DNA]</scope>
    <source>
        <strain>NCIMB 400</strain>
    </source>
</reference>
<sequence>MLSDLMINRDFLAYTLANPNQLPAAYDFMLADHTRVDVWDTGVIVFTPANATKDIVLSCAVHGNETAPIEICNQLIKDLLSQRIIAKQRVMFLIGNPTAILNKTRFIDENMNRLFSGAHSKGEGLSHPERHRAKALEQYVADFFNANSDNQRIHYDLHTAIRASKHEKFAIYPYRPGRAFSGEQIMFLAACGVDTMLFHHEPTTTFSYYSSQQFQADAFTVELGKVMPFGQNDMSRFAQTHTMLEKLITETKLAPVEFDPSKVNLYKVSRSINKHFDDFEFSFAGDAENFSAFSQGEVLATEGGNAIIVEYPQEAIVFPNANVPIGQRTVLCLVPAPNESIL</sequence>
<dbReference type="EC" id="3.5.1.96" evidence="1"/>
<dbReference type="EMBL" id="CP000447">
    <property type="protein sequence ID" value="ABI71780.1"/>
    <property type="molecule type" value="Genomic_DNA"/>
</dbReference>
<dbReference type="RefSeq" id="WP_011637395.1">
    <property type="nucleotide sequence ID" value="NC_008345.1"/>
</dbReference>
<dbReference type="SMR" id="Q082N5"/>
<dbReference type="STRING" id="318167.Sfri_1934"/>
<dbReference type="KEGG" id="sfr:Sfri_1934"/>
<dbReference type="eggNOG" id="COG2988">
    <property type="taxonomic scope" value="Bacteria"/>
</dbReference>
<dbReference type="HOGENOM" id="CLU_071608_0_0_6"/>
<dbReference type="OrthoDB" id="5290473at2"/>
<dbReference type="UniPathway" id="UPA00185">
    <property type="reaction ID" value="UER00283"/>
</dbReference>
<dbReference type="Proteomes" id="UP000000684">
    <property type="component" value="Chromosome"/>
</dbReference>
<dbReference type="GO" id="GO:0016788">
    <property type="term" value="F:hydrolase activity, acting on ester bonds"/>
    <property type="evidence" value="ECO:0007669"/>
    <property type="project" value="UniProtKB-UniRule"/>
</dbReference>
<dbReference type="GO" id="GO:0009017">
    <property type="term" value="F:succinylglutamate desuccinylase activity"/>
    <property type="evidence" value="ECO:0007669"/>
    <property type="project" value="UniProtKB-EC"/>
</dbReference>
<dbReference type="GO" id="GO:0008270">
    <property type="term" value="F:zinc ion binding"/>
    <property type="evidence" value="ECO:0007669"/>
    <property type="project" value="UniProtKB-UniRule"/>
</dbReference>
<dbReference type="GO" id="GO:0019544">
    <property type="term" value="P:arginine catabolic process to glutamate"/>
    <property type="evidence" value="ECO:0007669"/>
    <property type="project" value="UniProtKB-UniRule"/>
</dbReference>
<dbReference type="GO" id="GO:0019545">
    <property type="term" value="P:arginine catabolic process to succinate"/>
    <property type="evidence" value="ECO:0007669"/>
    <property type="project" value="UniProtKB-UniRule"/>
</dbReference>
<dbReference type="CDD" id="cd03855">
    <property type="entry name" value="M14_ASTE"/>
    <property type="match status" value="1"/>
</dbReference>
<dbReference type="Gene3D" id="3.40.630.10">
    <property type="entry name" value="Zn peptidases"/>
    <property type="match status" value="1"/>
</dbReference>
<dbReference type="HAMAP" id="MF_00767">
    <property type="entry name" value="Arg_catab_AstE"/>
    <property type="match status" value="1"/>
</dbReference>
<dbReference type="InterPro" id="IPR050178">
    <property type="entry name" value="AspA/AstE_fam"/>
</dbReference>
<dbReference type="InterPro" id="IPR055438">
    <property type="entry name" value="AstE_AspA_cat"/>
</dbReference>
<dbReference type="InterPro" id="IPR007036">
    <property type="entry name" value="Aste_AspA_hybrid_dom"/>
</dbReference>
<dbReference type="InterPro" id="IPR016681">
    <property type="entry name" value="SuccinylGlu_desuccinylase"/>
</dbReference>
<dbReference type="NCBIfam" id="TIGR03242">
    <property type="entry name" value="arg_catab_astE"/>
    <property type="match status" value="1"/>
</dbReference>
<dbReference type="NCBIfam" id="NF003706">
    <property type="entry name" value="PRK05324.1"/>
    <property type="match status" value="1"/>
</dbReference>
<dbReference type="PANTHER" id="PTHR15162">
    <property type="entry name" value="ASPARTOACYLASE"/>
    <property type="match status" value="1"/>
</dbReference>
<dbReference type="PANTHER" id="PTHR15162:SF7">
    <property type="entry name" value="SUCCINYLGLUTAMATE DESUCCINYLASE"/>
    <property type="match status" value="1"/>
</dbReference>
<dbReference type="Pfam" id="PF24827">
    <property type="entry name" value="AstE_AspA_cat"/>
    <property type="match status" value="1"/>
</dbReference>
<dbReference type="Pfam" id="PF04952">
    <property type="entry name" value="AstE_AspA_hybrid"/>
    <property type="match status" value="1"/>
</dbReference>
<dbReference type="PIRSF" id="PIRSF017020">
    <property type="entry name" value="AstE"/>
    <property type="match status" value="1"/>
</dbReference>
<dbReference type="SUPFAM" id="SSF53187">
    <property type="entry name" value="Zn-dependent exopeptidases"/>
    <property type="match status" value="1"/>
</dbReference>